<organism>
    <name type="scientific">Mus musculus</name>
    <name type="common">Mouse</name>
    <dbReference type="NCBI Taxonomy" id="10090"/>
    <lineage>
        <taxon>Eukaryota</taxon>
        <taxon>Metazoa</taxon>
        <taxon>Chordata</taxon>
        <taxon>Craniata</taxon>
        <taxon>Vertebrata</taxon>
        <taxon>Euteleostomi</taxon>
        <taxon>Mammalia</taxon>
        <taxon>Eutheria</taxon>
        <taxon>Euarchontoglires</taxon>
        <taxon>Glires</taxon>
        <taxon>Rodentia</taxon>
        <taxon>Myomorpha</taxon>
        <taxon>Muroidea</taxon>
        <taxon>Muridae</taxon>
        <taxon>Murinae</taxon>
        <taxon>Mus</taxon>
        <taxon>Mus</taxon>
    </lineage>
</organism>
<gene>
    <name type="primary">Krt16</name>
    <name type="synonym">Krt1-16</name>
</gene>
<reference key="1">
    <citation type="journal article" date="1998" name="J. Biol. Chem.">
        <title>cDNA cloning, expression, and assembly characteristics of mouse keratin 16.</title>
        <authorList>
            <person name="Porter R.M."/>
            <person name="Hutcheson A.M."/>
            <person name="Rugg E.L."/>
            <person name="Quinlan R.A."/>
            <person name="Lane E.B."/>
        </authorList>
    </citation>
    <scope>NUCLEOTIDE SEQUENCE [MRNA]</scope>
    <source>
        <strain>C57BL/6J</strain>
    </source>
</reference>
<reference key="2">
    <citation type="journal article" date="1996" name="J. Cell Biol.">
        <title>Onset of re-epithelialization after skin injury correlates with a reorganization of keratin filaments in wound edge keratinocytes: defining a potential role for keratin 16.</title>
        <authorList>
            <person name="Paladini R.D."/>
            <person name="Takahashi K."/>
            <person name="Bravo N.S."/>
            <person name="Coulombe P.A."/>
        </authorList>
    </citation>
    <scope>INDUCTION</scope>
    <scope>SUBUNIT</scope>
</reference>
<reference key="3">
    <citation type="journal article" date="2000" name="Mol. Biol. Cell">
        <title>Forced expression of keratin 16 alters the adhesion, differentiation, and migration of mouse skin keratinocytes.</title>
        <authorList>
            <person name="Wawersik M."/>
            <person name="Coulombe P.A."/>
        </authorList>
    </citation>
    <scope>FUNCTION</scope>
</reference>
<reference key="4">
    <citation type="journal article" date="2001" name="Mol. Biol. Cell">
        <title>Complete cytolysis and neonatal lethality in keratin 5 knockout mice reveal its fundamental role in skin integrity and in epidermolysis bullosa simplex.</title>
        <authorList>
            <person name="Peters B."/>
            <person name="Kirfel J."/>
            <person name="Bussow H."/>
            <person name="Vidal M."/>
            <person name="Magin T.M."/>
        </authorList>
    </citation>
    <scope>DEVELOPMENTAL STAGE</scope>
</reference>
<reference key="5">
    <citation type="journal article" date="2002" name="J. Invest. Dermatol.">
        <title>Keratin 16 expression defines a subset of epithelial cells during skin morphogenesis and the hair cycle.</title>
        <authorList>
            <person name="Bernot K.M."/>
            <person name="Coulombe P.A."/>
            <person name="McGowan K.M."/>
        </authorList>
    </citation>
    <scope>TISSUE SPECIFICITY</scope>
    <scope>DEVELOPMENTAL STAGE</scope>
</reference>
<reference key="6">
    <citation type="journal article" date="2006" name="Genes Dev.">
        <title>Keratin 17 modulates hair follicle cycling in a TNFalpha-dependent fashion.</title>
        <authorList>
            <person name="Tong X."/>
            <person name="Coulombe P.A."/>
        </authorList>
    </citation>
    <scope>INTERACTION WITH TRADD</scope>
</reference>
<reference key="7">
    <citation type="journal article" date="2010" name="Cell">
        <title>A tissue-specific atlas of mouse protein phosphorylation and expression.</title>
        <authorList>
            <person name="Huttlin E.L."/>
            <person name="Jedrychowski M.P."/>
            <person name="Elias J.E."/>
            <person name="Goswami T."/>
            <person name="Rad R."/>
            <person name="Beausoleil S.A."/>
            <person name="Villen J."/>
            <person name="Haas W."/>
            <person name="Sowa M.E."/>
            <person name="Gygi S.P."/>
        </authorList>
    </citation>
    <scope>IDENTIFICATION BY MASS SPECTROMETRY [LARGE SCALE ANALYSIS]</scope>
    <source>
        <tissue>Brain</tissue>
        <tissue>Brown adipose tissue</tissue>
        <tissue>Heart</tissue>
        <tissue>Kidney</tissue>
        <tissue>Liver</tissue>
        <tissue>Lung</tissue>
        <tissue>Pancreas</tissue>
        <tissue>Spleen</tissue>
        <tissue>Testis</tissue>
    </source>
</reference>
<reference key="8">
    <citation type="journal article" date="2012" name="J. Invest. Dermatol.">
        <title>Keratin 16-null mice develop palmoplantar keratoderma, a hallmark feature of pachyonychia congenita and related disorders.</title>
        <authorList>
            <person name="Lessard J.C."/>
            <person name="Coulombe P.A."/>
        </authorList>
    </citation>
    <scope>FUNCTION</scope>
    <scope>DISRUPTION PHENOTYPE</scope>
</reference>
<reference key="9">
    <citation type="journal article" date="2013" name="Proc. Natl. Acad. Sci. U.S.A.">
        <title>Keratin 16 regulates innate immunity in response to epidermal barrier breach.</title>
        <authorList>
            <person name="Lessard J.C."/>
            <person name="Pina-Paz S."/>
            <person name="Rotty J.D."/>
            <person name="Hickerson R.P."/>
            <person name="Kaspar R.L."/>
            <person name="Balmain A."/>
            <person name="Coulombe P.A."/>
        </authorList>
    </citation>
    <scope>FUNCTION</scope>
</reference>
<reference key="10">
    <citation type="journal article" date="2016" name="Hum. Mol. Genet.">
        <title>Keratin 12 missense mutation induces the unfolded protein response and apoptosis in Meesmann epithelial corneal dystrophy.</title>
        <authorList>
            <person name="Allen E.H."/>
            <person name="Courtney D.G."/>
            <person name="Atkinson S.D."/>
            <person name="Moore J.E."/>
            <person name="Mairs L."/>
            <person name="Poulsen E.T."/>
            <person name="Schiroli D."/>
            <person name="Maurizi E."/>
            <person name="Cole C."/>
            <person name="Hickerson R.P."/>
            <person name="James J."/>
            <person name="Murgatroyd H."/>
            <person name="Smith F.J."/>
            <person name="MacEwen C."/>
            <person name="Enghild J.J."/>
            <person name="Nesbit M.A."/>
            <person name="Leslie Pedrioli D.M."/>
            <person name="McLean W.H."/>
            <person name="Moore C.B."/>
        </authorList>
    </citation>
    <scope>TISSUE SPECIFICITY</scope>
</reference>
<dbReference type="EMBL" id="AF053235">
    <property type="protein sequence ID" value="AAC79424.1"/>
    <property type="molecule type" value="mRNA"/>
</dbReference>
<dbReference type="CCDS" id="CCDS25414.1"/>
<dbReference type="RefSeq" id="NP_001300887.1">
    <property type="nucleotide sequence ID" value="NM_001313958.1"/>
</dbReference>
<dbReference type="RefSeq" id="NP_032496.1">
    <property type="nucleotide sequence ID" value="NM_008470.2"/>
</dbReference>
<dbReference type="SMR" id="Q9Z2K1"/>
<dbReference type="BioGRID" id="201021">
    <property type="interactions" value="17"/>
</dbReference>
<dbReference type="FunCoup" id="Q9Z2K1">
    <property type="interactions" value="149"/>
</dbReference>
<dbReference type="IntAct" id="Q9Z2K1">
    <property type="interactions" value="3"/>
</dbReference>
<dbReference type="MINT" id="Q9Z2K1"/>
<dbReference type="STRING" id="10090.ENSMUSP00000007280"/>
<dbReference type="GlyGen" id="Q9Z2K1">
    <property type="glycosylation" value="1 site, 1 O-linked glycan (1 site)"/>
</dbReference>
<dbReference type="iPTMnet" id="Q9Z2K1"/>
<dbReference type="PhosphoSitePlus" id="Q9Z2K1"/>
<dbReference type="CPTAC" id="non-CPTAC-3796"/>
<dbReference type="jPOST" id="Q9Z2K1"/>
<dbReference type="PaxDb" id="10090-ENSMUSP00000007280"/>
<dbReference type="ProteomicsDB" id="269162"/>
<dbReference type="Antibodypedia" id="3602">
    <property type="antibodies" value="674 antibodies from 38 providers"/>
</dbReference>
<dbReference type="DNASU" id="16666"/>
<dbReference type="Ensembl" id="ENSMUST00000007280.9">
    <property type="protein sequence ID" value="ENSMUSP00000007280.8"/>
    <property type="gene ID" value="ENSMUSG00000053797.11"/>
</dbReference>
<dbReference type="GeneID" id="16666"/>
<dbReference type="KEGG" id="mmu:16666"/>
<dbReference type="UCSC" id="uc007lkq.2">
    <property type="organism name" value="mouse"/>
</dbReference>
<dbReference type="AGR" id="MGI:96690"/>
<dbReference type="CTD" id="3868"/>
<dbReference type="MGI" id="MGI:96690">
    <property type="gene designation" value="Krt16"/>
</dbReference>
<dbReference type="VEuPathDB" id="HostDB:ENSMUSG00000053797"/>
<dbReference type="eggNOG" id="ENOG502QTM6">
    <property type="taxonomic scope" value="Eukaryota"/>
</dbReference>
<dbReference type="GeneTree" id="ENSGT00940000154602"/>
<dbReference type="HOGENOM" id="CLU_012560_8_1_1"/>
<dbReference type="InParanoid" id="Q9Z2K1"/>
<dbReference type="OMA" id="GHQTRPI"/>
<dbReference type="OrthoDB" id="2441647at2759"/>
<dbReference type="PhylomeDB" id="Q9Z2K1"/>
<dbReference type="TreeFam" id="TF332742"/>
<dbReference type="Reactome" id="R-MMU-6805567">
    <property type="pathway name" value="Keratinization"/>
</dbReference>
<dbReference type="Reactome" id="R-MMU-6809371">
    <property type="pathway name" value="Formation of the cornified envelope"/>
</dbReference>
<dbReference type="BioGRID-ORCS" id="16666">
    <property type="hits" value="1 hit in 79 CRISPR screens"/>
</dbReference>
<dbReference type="PRO" id="PR:Q9Z2K1"/>
<dbReference type="Proteomes" id="UP000000589">
    <property type="component" value="Chromosome 11"/>
</dbReference>
<dbReference type="RNAct" id="Q9Z2K1">
    <property type="molecule type" value="protein"/>
</dbReference>
<dbReference type="Bgee" id="ENSMUSG00000053797">
    <property type="expression patterns" value="Expressed in lip and 38 other cell types or tissues"/>
</dbReference>
<dbReference type="ExpressionAtlas" id="Q9Z2K1">
    <property type="expression patterns" value="baseline and differential"/>
</dbReference>
<dbReference type="GO" id="GO:0001533">
    <property type="term" value="C:cornified envelope"/>
    <property type="evidence" value="ECO:0000314"/>
    <property type="project" value="MGI"/>
</dbReference>
<dbReference type="GO" id="GO:0005882">
    <property type="term" value="C:intermediate filament"/>
    <property type="evidence" value="ECO:0000314"/>
    <property type="project" value="MGI"/>
</dbReference>
<dbReference type="GO" id="GO:0005200">
    <property type="term" value="F:structural constituent of cytoskeleton"/>
    <property type="evidence" value="ECO:0000314"/>
    <property type="project" value="MGI"/>
</dbReference>
<dbReference type="GO" id="GO:0061436">
    <property type="term" value="P:establishment of skin barrier"/>
    <property type="evidence" value="ECO:0000315"/>
    <property type="project" value="UniProtKB"/>
</dbReference>
<dbReference type="GO" id="GO:0042633">
    <property type="term" value="P:hair cycle"/>
    <property type="evidence" value="ECO:0007669"/>
    <property type="project" value="Ensembl"/>
</dbReference>
<dbReference type="GO" id="GO:0006954">
    <property type="term" value="P:inflammatory response"/>
    <property type="evidence" value="ECO:0000315"/>
    <property type="project" value="UniProtKB"/>
</dbReference>
<dbReference type="GO" id="GO:0045087">
    <property type="term" value="P:innate immune response"/>
    <property type="evidence" value="ECO:0000315"/>
    <property type="project" value="UniProtKB"/>
</dbReference>
<dbReference type="GO" id="GO:0045104">
    <property type="term" value="P:intermediate filament cytoskeleton organization"/>
    <property type="evidence" value="ECO:0000314"/>
    <property type="project" value="MGI"/>
</dbReference>
<dbReference type="GO" id="GO:0031424">
    <property type="term" value="P:keratinization"/>
    <property type="evidence" value="ECO:0000314"/>
    <property type="project" value="UniProtKB"/>
</dbReference>
<dbReference type="GO" id="GO:0030216">
    <property type="term" value="P:keratinocyte differentiation"/>
    <property type="evidence" value="ECO:0000314"/>
    <property type="project" value="UniProtKB"/>
</dbReference>
<dbReference type="GO" id="GO:0051546">
    <property type="term" value="P:keratinocyte migration"/>
    <property type="evidence" value="ECO:0000314"/>
    <property type="project" value="UniProtKB"/>
</dbReference>
<dbReference type="GO" id="GO:0002009">
    <property type="term" value="P:morphogenesis of an epithelium"/>
    <property type="evidence" value="ECO:0000315"/>
    <property type="project" value="UniProtKB"/>
</dbReference>
<dbReference type="GO" id="GO:0030336">
    <property type="term" value="P:negative regulation of cell migration"/>
    <property type="evidence" value="ECO:0007669"/>
    <property type="project" value="Ensembl"/>
</dbReference>
<dbReference type="FunFam" id="1.20.5.1160:FF:000002">
    <property type="entry name" value="Type I keratin 10"/>
    <property type="match status" value="1"/>
</dbReference>
<dbReference type="FunFam" id="1.20.5.170:FF:000002">
    <property type="entry name" value="Type I keratin KA11"/>
    <property type="match status" value="1"/>
</dbReference>
<dbReference type="FunFam" id="1.20.5.500:FF:000001">
    <property type="entry name" value="Type II keratin 23"/>
    <property type="match status" value="1"/>
</dbReference>
<dbReference type="Gene3D" id="1.20.5.170">
    <property type="match status" value="1"/>
</dbReference>
<dbReference type="Gene3D" id="1.20.5.500">
    <property type="entry name" value="Single helix bin"/>
    <property type="match status" value="1"/>
</dbReference>
<dbReference type="Gene3D" id="1.20.5.1160">
    <property type="entry name" value="Vasodilator-stimulated phosphoprotein"/>
    <property type="match status" value="1"/>
</dbReference>
<dbReference type="InterPro" id="IPR018039">
    <property type="entry name" value="IF_conserved"/>
</dbReference>
<dbReference type="InterPro" id="IPR039008">
    <property type="entry name" value="IF_rod_dom"/>
</dbReference>
<dbReference type="InterPro" id="IPR002957">
    <property type="entry name" value="Keratin_I"/>
</dbReference>
<dbReference type="PANTHER" id="PTHR23239">
    <property type="entry name" value="INTERMEDIATE FILAMENT"/>
    <property type="match status" value="1"/>
</dbReference>
<dbReference type="PANTHER" id="PTHR23239:SF105">
    <property type="entry name" value="KERATIN, TYPE I CYTOSKELETAL 16"/>
    <property type="match status" value="1"/>
</dbReference>
<dbReference type="Pfam" id="PF00038">
    <property type="entry name" value="Filament"/>
    <property type="match status" value="1"/>
</dbReference>
<dbReference type="PRINTS" id="PR01248">
    <property type="entry name" value="TYPE1KERATIN"/>
</dbReference>
<dbReference type="SMART" id="SM01391">
    <property type="entry name" value="Filament"/>
    <property type="match status" value="1"/>
</dbReference>
<dbReference type="SUPFAM" id="SSF64593">
    <property type="entry name" value="Intermediate filament protein, coiled coil region"/>
    <property type="match status" value="2"/>
</dbReference>
<dbReference type="PROSITE" id="PS00226">
    <property type="entry name" value="IF_ROD_1"/>
    <property type="match status" value="1"/>
</dbReference>
<dbReference type="PROSITE" id="PS51842">
    <property type="entry name" value="IF_ROD_2"/>
    <property type="match status" value="1"/>
</dbReference>
<feature type="chain" id="PRO_0000063663" description="Keratin, type I cytoskeletal 16">
    <location>
        <begin position="1"/>
        <end position="469"/>
    </location>
</feature>
<feature type="domain" description="IF rod" evidence="2">
    <location>
        <begin position="113"/>
        <end position="424"/>
    </location>
</feature>
<feature type="region of interest" description="Head">
    <location>
        <begin position="1"/>
        <end position="112"/>
    </location>
</feature>
<feature type="region of interest" description="Disordered" evidence="3">
    <location>
        <begin position="1"/>
        <end position="20"/>
    </location>
</feature>
<feature type="region of interest" description="Coil 1A">
    <location>
        <begin position="113"/>
        <end position="148"/>
    </location>
</feature>
<feature type="region of interest" description="Linker 1">
    <location>
        <begin position="149"/>
        <end position="166"/>
    </location>
</feature>
<feature type="region of interest" description="Coil 1B">
    <location>
        <begin position="167"/>
        <end position="258"/>
    </location>
</feature>
<feature type="region of interest" description="Linker 12">
    <location>
        <begin position="259"/>
        <end position="281"/>
    </location>
</feature>
<feature type="region of interest" description="Coil 2">
    <location>
        <begin position="282"/>
        <end position="420"/>
    </location>
</feature>
<feature type="region of interest" description="Tail">
    <location>
        <begin position="421"/>
        <end position="469"/>
    </location>
</feature>
<feature type="region of interest" description="Disordered" evidence="3">
    <location>
        <begin position="422"/>
        <end position="469"/>
    </location>
</feature>
<feature type="compositionally biased region" description="Low complexity" evidence="3">
    <location>
        <begin position="423"/>
        <end position="444"/>
    </location>
</feature>
<feature type="compositionally biased region" description="Low complexity" evidence="3">
    <location>
        <begin position="454"/>
        <end position="469"/>
    </location>
</feature>
<keyword id="KW-0175">Coiled coil</keyword>
<keyword id="KW-0391">Immunity</keyword>
<keyword id="KW-0399">Innate immunity</keyword>
<keyword id="KW-0403">Intermediate filament</keyword>
<keyword id="KW-0416">Keratin</keyword>
<keyword id="KW-1185">Reference proteome</keyword>
<protein>
    <recommendedName>
        <fullName>Keratin, type I cytoskeletal 16</fullName>
    </recommendedName>
    <alternativeName>
        <fullName>Cytokeratin-16</fullName>
        <shortName>CK-16</shortName>
    </alternativeName>
    <alternativeName>
        <fullName>Keratin-16</fullName>
        <shortName>K16</shortName>
    </alternativeName>
</protein>
<name>K1C16_MOUSE</name>
<accession>Q9Z2K1</accession>
<sequence>MATCSRQFTSSSSMKGSCGIGGGSSRMSSILAGGSCRAPSTCGGMSVTSSRFSSGGVCGIGGGYGGSFSSSSFGGGLGSGFGGRFDGFGGGFGAGLGGGLGGGIGDGLLVGSEKVTMQNLNDRLATYLDKVRALEEANRDLEVKIRDWYQRQRPTEIKDYSPYFKTIEDLKSKIIIATQENAQFTLQIDNARLAADDFRTKYENELFLRQSVEGDINGLRKVLDELTLSRADLEMQIENLREELAFLKKNHEEEMLALRGQTGGDVNVEMDAAPGVDLSRILNEMRDQYEQMAEKNRRDVEAWFLRKTEELNKEVASNSDLIQSNRSEVAELRRVFQGLEIELQSQLSMKASLENSLEETKGRYCMQLSQIQGLISSVEEQLAQLRCEMEQQSQEYNILLDVKTRLEQEIATYRRLLDGENIHSSSQHSSGQSYSSREVFSSSSRQPRSILKEQGSTSFSQSQSQSSRD</sequence>
<evidence type="ECO:0000250" key="1">
    <source>
        <dbReference type="UniProtKB" id="P08779"/>
    </source>
</evidence>
<evidence type="ECO:0000255" key="2">
    <source>
        <dbReference type="PROSITE-ProRule" id="PRU01188"/>
    </source>
</evidence>
<evidence type="ECO:0000256" key="3">
    <source>
        <dbReference type="SAM" id="MobiDB-lite"/>
    </source>
</evidence>
<evidence type="ECO:0000269" key="4">
    <source>
    </source>
</evidence>
<evidence type="ECO:0000269" key="5">
    <source>
    </source>
</evidence>
<evidence type="ECO:0000269" key="6">
    <source>
    </source>
</evidence>
<evidence type="ECO:0000269" key="7">
    <source>
    </source>
</evidence>
<evidence type="ECO:0000269" key="8">
    <source>
    </source>
</evidence>
<evidence type="ECO:0000269" key="9">
    <source>
    </source>
</evidence>
<evidence type="ECO:0000269" key="10">
    <source>
    </source>
</evidence>
<evidence type="ECO:0000269" key="11">
    <source>
    </source>
</evidence>
<comment type="function">
    <text evidence="4 8 9">Epidermis-specific type I keratin that plays a key role in skin (PubMed:22336941, PubMed:24218583). Acts as a regulator of innate immunity in response to skin barrier breach: required for some inflammatory checkpoint for the skin barrier maintenance (PubMed:24218583).</text>
</comment>
<comment type="subunit">
    <text evidence="1 7 11">Heterodimer of a type I and a type II keratin. KRT16 associates with KRT6 isomers (KRT6A or KRT6B) (PubMed:8636216). Interacts with TCHP (By similarity). Interacts with TRADD (PubMed:16702408).</text>
</comment>
<comment type="tissue specificity">
    <text evidence="6 10">Expressed in the epithelia of the tongue, upper and lower palate, footpad, proximal nail fold and nail bed, penile spine, sweat gland ducts, and back epidermis (at protein level) (PubMed:12445204). Expressed in upper suprabasal layers of the corneal epithelium (at protein level) (PubMed:26758872). Expressed in internal stratified epithelia in the esophagus and vagina (at protein level) (PubMed:12445204). Expressed in transitional stratified squamous epithelia in the forestomach, anal canal, and nasal cavity (at protein level) (PubMed:12445204). Expressed in transitional epithelia of the ureter, bladder and urethra (at protein level) (PubMed:12445204). In mature hair follicles, expressed in the companion layer of the outer root sheath during anagen and in the club hair sheath during catagen and telogen (at protein level) (PubMed:12445204).</text>
</comment>
<comment type="developmental stage">
    <text evidence="5 6">During embryonic development, initially localizes within early hair germs, but rapidly shifts to a subset of cells at the interface of basal and suprabasal cells above and around the hair germ (PubMed:12445204). Expressed in hair follicles and in most cells in the spinous layer at birth (PubMed:11408584).</text>
</comment>
<comment type="induction">
    <text evidence="11">In response to epidermal stress such as wounding.</text>
</comment>
<comment type="disruption phenotype">
    <text evidence="8">Mice were born alive at approximately Mendelian ratios but increased postnatal mortality is observed. Surviving mice show oral lesions as well as palmoplantar keratoderma-like hyperkeratotic calluses on front and hind paws, which impair the ability to walk.</text>
</comment>
<comment type="miscellaneous">
    <text>There are two types of cytoskeletal and microfibrillar keratin: I (acidic; 40-55 kDa) and II (neutral to basic; 56-70 kDa).</text>
</comment>
<comment type="similarity">
    <text evidence="2">Belongs to the intermediate filament family.</text>
</comment>
<proteinExistence type="evidence at protein level"/>